<dbReference type="EMBL" id="CP000086">
    <property type="protein sequence ID" value="ABC38243.1"/>
    <property type="molecule type" value="Genomic_DNA"/>
</dbReference>
<dbReference type="RefSeq" id="WP_009889100.1">
    <property type="nucleotide sequence ID" value="NZ_CP008785.1"/>
</dbReference>
<dbReference type="SMR" id="Q2SZ68"/>
<dbReference type="GeneID" id="45120983"/>
<dbReference type="KEGG" id="bte:BTH_I1234"/>
<dbReference type="HOGENOM" id="CLU_046483_2_1_4"/>
<dbReference type="Proteomes" id="UP000001930">
    <property type="component" value="Chromosome I"/>
</dbReference>
<dbReference type="GO" id="GO:0022627">
    <property type="term" value="C:cytosolic small ribosomal subunit"/>
    <property type="evidence" value="ECO:0007669"/>
    <property type="project" value="TreeGrafter"/>
</dbReference>
<dbReference type="GO" id="GO:0003723">
    <property type="term" value="F:RNA binding"/>
    <property type="evidence" value="ECO:0007669"/>
    <property type="project" value="TreeGrafter"/>
</dbReference>
<dbReference type="GO" id="GO:0003735">
    <property type="term" value="F:structural constituent of ribosome"/>
    <property type="evidence" value="ECO:0007669"/>
    <property type="project" value="InterPro"/>
</dbReference>
<dbReference type="GO" id="GO:0006412">
    <property type="term" value="P:translation"/>
    <property type="evidence" value="ECO:0007669"/>
    <property type="project" value="UniProtKB-UniRule"/>
</dbReference>
<dbReference type="FunFam" id="3.30.230.10:FF:000001">
    <property type="entry name" value="30S ribosomal protein S9"/>
    <property type="match status" value="1"/>
</dbReference>
<dbReference type="Gene3D" id="3.30.230.10">
    <property type="match status" value="1"/>
</dbReference>
<dbReference type="HAMAP" id="MF_00532_B">
    <property type="entry name" value="Ribosomal_uS9_B"/>
    <property type="match status" value="1"/>
</dbReference>
<dbReference type="InterPro" id="IPR020568">
    <property type="entry name" value="Ribosomal_Su5_D2-typ_SF"/>
</dbReference>
<dbReference type="InterPro" id="IPR000754">
    <property type="entry name" value="Ribosomal_uS9"/>
</dbReference>
<dbReference type="InterPro" id="IPR023035">
    <property type="entry name" value="Ribosomal_uS9_bac/plastid"/>
</dbReference>
<dbReference type="InterPro" id="IPR020574">
    <property type="entry name" value="Ribosomal_uS9_CS"/>
</dbReference>
<dbReference type="InterPro" id="IPR014721">
    <property type="entry name" value="Ribsml_uS5_D2-typ_fold_subgr"/>
</dbReference>
<dbReference type="NCBIfam" id="NF001099">
    <property type="entry name" value="PRK00132.1"/>
    <property type="match status" value="1"/>
</dbReference>
<dbReference type="PANTHER" id="PTHR21569">
    <property type="entry name" value="RIBOSOMAL PROTEIN S9"/>
    <property type="match status" value="1"/>
</dbReference>
<dbReference type="PANTHER" id="PTHR21569:SF1">
    <property type="entry name" value="SMALL RIBOSOMAL SUBUNIT PROTEIN US9M"/>
    <property type="match status" value="1"/>
</dbReference>
<dbReference type="Pfam" id="PF00380">
    <property type="entry name" value="Ribosomal_S9"/>
    <property type="match status" value="1"/>
</dbReference>
<dbReference type="SUPFAM" id="SSF54211">
    <property type="entry name" value="Ribosomal protein S5 domain 2-like"/>
    <property type="match status" value="1"/>
</dbReference>
<dbReference type="PROSITE" id="PS00360">
    <property type="entry name" value="RIBOSOMAL_S9"/>
    <property type="match status" value="1"/>
</dbReference>
<gene>
    <name evidence="1" type="primary">rpsI</name>
    <name type="ordered locus">BTH_I1234</name>
</gene>
<organism>
    <name type="scientific">Burkholderia thailandensis (strain ATCC 700388 / DSM 13276 / CCUG 48851 / CIP 106301 / E264)</name>
    <dbReference type="NCBI Taxonomy" id="271848"/>
    <lineage>
        <taxon>Bacteria</taxon>
        <taxon>Pseudomonadati</taxon>
        <taxon>Pseudomonadota</taxon>
        <taxon>Betaproteobacteria</taxon>
        <taxon>Burkholderiales</taxon>
        <taxon>Burkholderiaceae</taxon>
        <taxon>Burkholderia</taxon>
        <taxon>pseudomallei group</taxon>
    </lineage>
</organism>
<name>RS9_BURTA</name>
<accession>Q2SZ68</accession>
<evidence type="ECO:0000255" key="1">
    <source>
        <dbReference type="HAMAP-Rule" id="MF_00532"/>
    </source>
</evidence>
<evidence type="ECO:0000305" key="2"/>
<proteinExistence type="inferred from homology"/>
<reference key="1">
    <citation type="journal article" date="2005" name="BMC Genomics">
        <title>Bacterial genome adaptation to niches: divergence of the potential virulence genes in three Burkholderia species of different survival strategies.</title>
        <authorList>
            <person name="Kim H.S."/>
            <person name="Schell M.A."/>
            <person name="Yu Y."/>
            <person name="Ulrich R.L."/>
            <person name="Sarria S.H."/>
            <person name="Nierman W.C."/>
            <person name="DeShazer D."/>
        </authorList>
    </citation>
    <scope>NUCLEOTIDE SEQUENCE [LARGE SCALE GENOMIC DNA]</scope>
    <source>
        <strain>ATCC 700388 / DSM 13276 / CCUG 48851 / CIP 106301 / E264</strain>
    </source>
</reference>
<feature type="chain" id="PRO_1000051192" description="Small ribosomal subunit protein uS9">
    <location>
        <begin position="1"/>
        <end position="130"/>
    </location>
</feature>
<sequence>MIGNWNYGTGRRKSAVARVFIKAGKGDIIVNGKPIADYFSRETSLMIVRQPLELTNHAQTFDIKVNVTGGGETGQAGAVRHGITRALIDYDATLKPSLSNAGFVTRDAREVERKKVGLHKARRAKQFSKR</sequence>
<protein>
    <recommendedName>
        <fullName evidence="1">Small ribosomal subunit protein uS9</fullName>
    </recommendedName>
    <alternativeName>
        <fullName evidence="2">30S ribosomal protein S9</fullName>
    </alternativeName>
</protein>
<comment type="similarity">
    <text evidence="1">Belongs to the universal ribosomal protein uS9 family.</text>
</comment>
<keyword id="KW-0687">Ribonucleoprotein</keyword>
<keyword id="KW-0689">Ribosomal protein</keyword>